<sequence length="231" mass="25956">MAAAEMERTTSFDAAEKLKAADAGGGEVDDELEEGEIVEESNDTASYLGKEITVKHPLEHSWTFWFDSPIAKSRQTAWGSSLRNVYTFSTVEDFWGAYNNIHHPSKLVMGADFHCFKHKIEPKWEDPVCANGGTWKMSFLKGKSDTSWLYTLLAMIGHQFDHGDEICGAVVSVRSKGEKIALWTKNAANETAQVSIGKQWKQFLDHSDSVGFIFHDDAKRLDRSAKNRYTV</sequence>
<keyword id="KW-0963">Cytoplasm</keyword>
<keyword id="KW-1015">Disulfide bond</keyword>
<keyword id="KW-0945">Host-virus interaction</keyword>
<keyword id="KW-0396">Initiation factor</keyword>
<keyword id="KW-0539">Nucleus</keyword>
<keyword id="KW-0611">Plant defense</keyword>
<keyword id="KW-0648">Protein biosynthesis</keyword>
<keyword id="KW-1185">Reference proteome</keyword>
<keyword id="KW-0694">RNA-binding</keyword>
<keyword id="KW-0810">Translation regulation</keyword>
<protein>
    <recommendedName>
        <fullName evidence="8 10">Eukaryotic translation initiation factor 4E allele A</fullName>
        <shortName evidence="8 10">eIF4E-A</shortName>
    </recommendedName>
    <alternativeName>
        <fullName evidence="11">eIF-4F 25 kDa subunit</fullName>
    </alternativeName>
    <alternativeName>
        <fullName evidence="11">eIF-4F p26 subunit</fullName>
    </alternativeName>
    <alternativeName>
        <fullName evidence="11">mRNA cap-binding protein</fullName>
    </alternativeName>
</protein>
<dbReference type="EMBL" id="FN666435">
    <property type="protein sequence ID" value="CBJ34334.1"/>
    <property type="molecule type" value="mRNA"/>
</dbReference>
<dbReference type="EMBL" id="JN831440">
    <property type="protein sequence ID" value="AEX01233.1"/>
    <property type="molecule type" value="mRNA"/>
</dbReference>
<dbReference type="EMBL" id="JN831441">
    <property type="protein sequence ID" value="AEX01234.1"/>
    <property type="molecule type" value="mRNA"/>
</dbReference>
<dbReference type="EMBL" id="JN831442">
    <property type="protein sequence ID" value="AEX01235.1"/>
    <property type="molecule type" value="mRNA"/>
</dbReference>
<dbReference type="EMBL" id="JF927213">
    <property type="protein sequence ID" value="AEW07371.1"/>
    <property type="molecule type" value="mRNA"/>
</dbReference>
<dbReference type="EMBL" id="MT828880">
    <property type="protein sequence ID" value="QQP16450.1"/>
    <property type="molecule type" value="mRNA"/>
</dbReference>
<dbReference type="EMBL" id="MK572846">
    <property type="protein sequence ID" value="QCI62445.1"/>
    <property type="molecule type" value="mRNA"/>
</dbReference>
<dbReference type="RefSeq" id="NP_001275360.1">
    <property type="nucleotide sequence ID" value="NM_001288431.1"/>
</dbReference>
<dbReference type="SMR" id="D3UW26"/>
<dbReference type="FunCoup" id="D3UW26">
    <property type="interactions" value="2650"/>
</dbReference>
<dbReference type="STRING" id="4113.M1B1I1"/>
<dbReference type="PaxDb" id="4113-PGSC0003DMT400034911"/>
<dbReference type="GeneID" id="102580433"/>
<dbReference type="KEGG" id="sot:102580433"/>
<dbReference type="eggNOG" id="KOG1670">
    <property type="taxonomic scope" value="Eukaryota"/>
</dbReference>
<dbReference type="HOGENOM" id="CLU_043552_2_1_1"/>
<dbReference type="InParanoid" id="D3UW26"/>
<dbReference type="OrthoDB" id="590761at2759"/>
<dbReference type="Proteomes" id="UP000011115">
    <property type="component" value="Unassembled WGS sequence"/>
</dbReference>
<dbReference type="ExpressionAtlas" id="D3UW26">
    <property type="expression patterns" value="baseline and differential"/>
</dbReference>
<dbReference type="GO" id="GO:0005737">
    <property type="term" value="C:cytoplasm"/>
    <property type="evidence" value="ECO:0000250"/>
    <property type="project" value="UniProtKB"/>
</dbReference>
<dbReference type="GO" id="GO:0016281">
    <property type="term" value="C:eukaryotic translation initiation factor 4F complex"/>
    <property type="evidence" value="ECO:0000318"/>
    <property type="project" value="GO_Central"/>
</dbReference>
<dbReference type="GO" id="GO:0005634">
    <property type="term" value="C:nucleus"/>
    <property type="evidence" value="ECO:0000250"/>
    <property type="project" value="UniProtKB"/>
</dbReference>
<dbReference type="GO" id="GO:0000340">
    <property type="term" value="F:RNA 7-methylguanosine cap binding"/>
    <property type="evidence" value="ECO:0000318"/>
    <property type="project" value="GO_Central"/>
</dbReference>
<dbReference type="GO" id="GO:0003723">
    <property type="term" value="F:RNA binding"/>
    <property type="evidence" value="ECO:0000250"/>
    <property type="project" value="UniProtKB"/>
</dbReference>
<dbReference type="GO" id="GO:0003743">
    <property type="term" value="F:translation initiation factor activity"/>
    <property type="evidence" value="ECO:0000250"/>
    <property type="project" value="UniProtKB"/>
</dbReference>
<dbReference type="GO" id="GO:0051607">
    <property type="term" value="P:defense response to virus"/>
    <property type="evidence" value="ECO:0000250"/>
    <property type="project" value="UniProtKB"/>
</dbReference>
<dbReference type="GO" id="GO:0006417">
    <property type="term" value="P:regulation of translation"/>
    <property type="evidence" value="ECO:0007669"/>
    <property type="project" value="UniProtKB-KW"/>
</dbReference>
<dbReference type="GO" id="GO:0006413">
    <property type="term" value="P:translational initiation"/>
    <property type="evidence" value="ECO:0000250"/>
    <property type="project" value="UniProtKB"/>
</dbReference>
<dbReference type="FunFam" id="3.30.760.10:FF:000003">
    <property type="entry name" value="Eukaryotic translation initiation factor 4E"/>
    <property type="match status" value="1"/>
</dbReference>
<dbReference type="Gene3D" id="3.30.760.10">
    <property type="entry name" value="RNA Cap, Translation Initiation Factor Eif4e"/>
    <property type="match status" value="1"/>
</dbReference>
<dbReference type="InterPro" id="IPR023398">
    <property type="entry name" value="TIF_eIF4e-like"/>
</dbReference>
<dbReference type="InterPro" id="IPR001040">
    <property type="entry name" value="TIF_eIF_4E"/>
</dbReference>
<dbReference type="PANTHER" id="PTHR11960">
    <property type="entry name" value="EUKARYOTIC TRANSLATION INITIATION FACTOR 4E RELATED"/>
    <property type="match status" value="1"/>
</dbReference>
<dbReference type="PANTHER" id="PTHR11960:SF43">
    <property type="entry name" value="EUKARYOTIC TRANSLATION INITIATION FACTOR 4E-1"/>
    <property type="match status" value="1"/>
</dbReference>
<dbReference type="Pfam" id="PF01652">
    <property type="entry name" value="IF4E"/>
    <property type="match status" value="1"/>
</dbReference>
<dbReference type="SUPFAM" id="SSF55418">
    <property type="entry name" value="eIF4e-like"/>
    <property type="match status" value="1"/>
</dbReference>
<accession>D3UW26</accession>
<accession>A0A6G5S7W0</accession>
<accession>G9JJS1</accession>
<accession>G9JJS2</accession>
<accession>G9JJS3</accession>
<accession>M1B1I1</accession>
<accession>R4HZ52</accession>
<gene>
    <name evidence="8 9 10" type="primary">eIF4Ea</name>
    <name evidence="8" type="synonym">P4Ea</name>
</gene>
<comment type="function">
    <text evidence="2 5 6 7">Component of the protein complex eIF4F, which is involved in the recognition of the mRNA cap, ATP-dependent unwinding of 5'-terminal secondary structure and recruitment of mRNA to the ribosome (By similarity). Recognizes and binds the 7-methylguanosine-containing mRNA cap during an early step in the initiation of protein synthesis and facilitates ribosome binding by inducing the unwinding of the mRNAs secondary structures (By similarity). Key component of recessive resistance to potyviruses (PubMed:21668622, PubMed:22146867, PubMed:31906869).</text>
</comment>
<comment type="function">
    <text evidence="5 6 7">(Microbial infection) Susceptibility host factor required for viral infection (e.g. Potato virus Y (PVY)) by recruiting viral RNAs to the host ribosomal complex via an interaction with viral genome-linked protein (VPg).</text>
</comment>
<comment type="subunit">
    <text evidence="2">EIF4F is a multi-subunit complex, the composition of which varies with external and internal environmental conditions (By similarity). It is composed of at least EIF4A, EIF4E and EIF4G (By similarity). EIF4E is also known to interact with other partners. In higher plants two isoforms of EIF4F have been identified, named isoform EIF4F and isoform EIF(iso)4F (By similarity). Isoform EIF4F has subunits p220 and p26, whereas isoform EIF(iso)4F has subunits p82 and p28 (By similarity).</text>
</comment>
<comment type="subunit">
    <text evidence="12 13 14">(Microbial infection) Interacts with viral genome-linked protein (VPg); this interaction is possible in susceptible hosts but impaired in resistant plants.</text>
</comment>
<comment type="subcellular location">
    <subcellularLocation>
        <location evidence="1">Nucleus</location>
    </subcellularLocation>
    <subcellularLocation>
        <location evidence="1">Cytoplasm</location>
    </subcellularLocation>
</comment>
<comment type="PTM">
    <text evidence="2">According to the redox status, the Cys-129-Cys-167 disulfide bridge may have a role in regulating protein function by affecting its ability to bind capped mRNA.</text>
</comment>
<comment type="similarity">
    <text evidence="11">Belongs to the eukaryotic initiation factor 4E family.</text>
</comment>
<organism>
    <name type="scientific">Solanum tuberosum</name>
    <name type="common">Potato</name>
    <dbReference type="NCBI Taxonomy" id="4113"/>
    <lineage>
        <taxon>Eukaryota</taxon>
        <taxon>Viridiplantae</taxon>
        <taxon>Streptophyta</taxon>
        <taxon>Embryophyta</taxon>
        <taxon>Tracheophyta</taxon>
        <taxon>Spermatophyta</taxon>
        <taxon>Magnoliopsida</taxon>
        <taxon>eudicotyledons</taxon>
        <taxon>Gunneridae</taxon>
        <taxon>Pentapetalae</taxon>
        <taxon>asterids</taxon>
        <taxon>lamiids</taxon>
        <taxon>Solanales</taxon>
        <taxon>Solanaceae</taxon>
        <taxon>Solanoideae</taxon>
        <taxon>Solaneae</taxon>
        <taxon>Solanum</taxon>
    </lineage>
</organism>
<proteinExistence type="evidence at protein level"/>
<evidence type="ECO:0000250" key="1">
    <source>
        <dbReference type="UniProtKB" id="K0P2S0"/>
    </source>
</evidence>
<evidence type="ECO:0000250" key="2">
    <source>
        <dbReference type="UniProtKB" id="P29557"/>
    </source>
</evidence>
<evidence type="ECO:0000250" key="3">
    <source>
        <dbReference type="UniProtKB" id="Q00LS8"/>
    </source>
</evidence>
<evidence type="ECO:0000256" key="4">
    <source>
        <dbReference type="SAM" id="MobiDB-lite"/>
    </source>
</evidence>
<evidence type="ECO:0000269" key="5">
    <source>
    </source>
</evidence>
<evidence type="ECO:0000269" key="6">
    <source>
    </source>
</evidence>
<evidence type="ECO:0000269" key="7">
    <source>
    </source>
</evidence>
<evidence type="ECO:0000303" key="8">
    <source>
    </source>
</evidence>
<evidence type="ECO:0000303" key="9">
    <source>
    </source>
</evidence>
<evidence type="ECO:0000303" key="10">
    <source>
    </source>
</evidence>
<evidence type="ECO:0000305" key="11"/>
<evidence type="ECO:0000305" key="12">
    <source>
    </source>
</evidence>
<evidence type="ECO:0000305" key="13">
    <source>
    </source>
</evidence>
<evidence type="ECO:0000305" key="14">
    <source>
    </source>
</evidence>
<feature type="chain" id="PRO_0000454057" description="Eukaryotic translation initiation factor 4E allele A">
    <location>
        <begin position="1"/>
        <end position="231"/>
    </location>
</feature>
<feature type="region of interest" description="Disordered" evidence="4">
    <location>
        <begin position="1"/>
        <end position="36"/>
    </location>
</feature>
<feature type="region of interest" description="EIF4G-binding" evidence="3">
    <location>
        <begin position="56"/>
        <end position="59"/>
    </location>
</feature>
<feature type="region of interest" description="EIF4G-binding" evidence="3">
    <location>
        <begin position="66"/>
        <end position="102"/>
    </location>
</feature>
<feature type="region of interest" description="EIF4G-binding" evidence="3">
    <location>
        <begin position="150"/>
        <end position="159"/>
    </location>
</feature>
<feature type="compositionally biased region" description="Basic and acidic residues" evidence="4">
    <location>
        <begin position="1"/>
        <end position="20"/>
    </location>
</feature>
<feature type="compositionally biased region" description="Acidic residues" evidence="4">
    <location>
        <begin position="27"/>
        <end position="36"/>
    </location>
</feature>
<feature type="binding site" evidence="2">
    <location>
        <begin position="74"/>
        <end position="79"/>
    </location>
    <ligand>
        <name>mRNA</name>
        <dbReference type="ChEBI" id="CHEBI:33699"/>
    </ligand>
    <ligandPart>
        <name>N(7)-methylguanosine 5'-triphosphate group</name>
        <dbReference type="ChEBI" id="CHEBI:74429"/>
        <note>m7GTP residue in mRNA cap</note>
    </ligandPart>
</feature>
<feature type="binding site" evidence="2">
    <location>
        <position position="106"/>
    </location>
    <ligand>
        <name>mRNA</name>
        <dbReference type="ChEBI" id="CHEBI:33699"/>
    </ligand>
    <ligandPart>
        <name>N(7)-methylguanosine 5'-triphosphate group</name>
        <dbReference type="ChEBI" id="CHEBI:74429"/>
        <note>m7GTP residue in mRNA cap</note>
    </ligandPart>
</feature>
<feature type="binding site" evidence="2">
    <location>
        <begin position="124"/>
        <end position="125"/>
    </location>
    <ligand>
        <name>mRNA</name>
        <dbReference type="ChEBI" id="CHEBI:33699"/>
    </ligand>
    <ligandPart>
        <name>N(7)-methylguanosine 5'-triphosphate group</name>
        <dbReference type="ChEBI" id="CHEBI:74429"/>
        <note>m7GTP residue in mRNA cap</note>
    </ligandPart>
</feature>
<feature type="binding site" evidence="2">
    <location>
        <begin position="174"/>
        <end position="179"/>
    </location>
    <ligand>
        <name>mRNA</name>
        <dbReference type="ChEBI" id="CHEBI:33699"/>
    </ligand>
    <ligandPart>
        <name>N(7)-methylguanosine 5'-triphosphate group</name>
        <dbReference type="ChEBI" id="CHEBI:74429"/>
        <note>m7GTP residue in mRNA cap</note>
    </ligandPart>
</feature>
<feature type="binding site" evidence="3">
    <location>
        <begin position="219"/>
        <end position="223"/>
    </location>
    <ligand>
        <name>mRNA</name>
        <dbReference type="ChEBI" id="CHEBI:33699"/>
    </ligand>
    <ligandPart>
        <name>N(7)-methylguanosine 5'-triphosphate group</name>
        <dbReference type="ChEBI" id="CHEBI:74429"/>
        <note>m7GTP residue in mRNA cap</note>
    </ligandPart>
</feature>
<feature type="disulfide bond" evidence="2">
    <location>
        <begin position="129"/>
        <end position="167"/>
    </location>
</feature>
<feature type="sequence variant" description="In strain: Russet Burbank-0, alleles 1, 2 and 3." evidence="5">
    <original>A</original>
    <variation>T</variation>
    <location>
        <position position="3"/>
    </location>
</feature>
<feature type="sequence variant" description="In strain: Russet Burbank-0, allele 1." evidence="5 6">
    <original>S</original>
    <variation>N</variation>
    <location>
        <position position="138"/>
    </location>
</feature>
<feature type="sequence variant" description="In strain: Russet Burbank-0, allele 1." evidence="5 6">
    <original>H</original>
    <variation>Y</variation>
    <location>
        <position position="206"/>
    </location>
</feature>
<feature type="mutagenesis site" description="No resistance to potyviruses (e.g. potato virus Y (PVY)); when associated with K-68, D-77 and I-109." evidence="5">
    <original>L</original>
    <variation>F</variation>
    <location>
        <position position="48"/>
    </location>
</feature>
<feature type="mutagenesis site" description="No resistance to potyviruses (e.g. potato virus Y (PVY)); when associated with F-48, D-77 and I-109." evidence="5">
    <original>S</original>
    <variation>K</variation>
    <location>
        <position position="68"/>
    </location>
</feature>
<feature type="mutagenesis site" description="No resistance to potyviruses (e.g. potato virus Y (PVY)); when associated with N-70, R-82, R-110 and N-112." evidence="5">
    <original>P</original>
    <variation>T</variation>
    <location>
        <position position="69"/>
    </location>
</feature>
<feature type="mutagenesis site" description="Increased resistance to potyviruses (e.g. potato virus Y (PVY)); when associated with R-82 and N-112. No resistance to potyviruses (e.g. potato virus Y (PVY)); when associated with T-69, R-82, R-110 and N-112." evidence="5">
    <original>I</original>
    <variation>E</variation>
    <variation>N</variation>
    <location>
        <position position="70"/>
    </location>
</feature>
<feature type="mutagenesis site" description="No resistance to potyviruses (e.g. potato virus Y (PVY)); when associated with F-48, K-68 and I-109." evidence="5">
    <original>A</original>
    <variation>D</variation>
    <location>
        <position position="77"/>
    </location>
</feature>
<feature type="mutagenesis site" description="Increased resistance to potyviruses (e.g. potato virus Y (PVY)); when associated with N-70 or E-70 and N-112. No resistance to potyviruses (e.g. potato virus Y (PVY)); when associated with T-69, N-70, R-110 and N-112." evidence="5">
    <original>L</original>
    <variation>R</variation>
    <location>
        <position position="82"/>
    </location>
</feature>
<feature type="mutagenesis site" description="No resistance to potyviruses (e.g. potato virus Y (PVY)); when associated with F-48, K-68 and D-77." evidence="5">
    <original>M</original>
    <variation>I</variation>
    <location>
        <position position="109"/>
    </location>
</feature>
<feature type="mutagenesis site" description="No resistance to potyviruses (e.g. potato virus Y (PVY)). No resistance to potyviruses (e.g. potato virus Y (PVY)); when associated with T-69, N-70, R-82 and N-112." evidence="5">
    <original>G</original>
    <variation>R</variation>
    <location>
        <position position="110"/>
    </location>
</feature>
<feature type="mutagenesis site" description="Increased resistance to potyviruses (e.g. potato virus Y (PVY)); when associated with N-70 or E-70 and R-82. No resistance to potyviruses (e.g. potato virus Y (PVY)); when associated with T-69, N-70, R-82 and R-110." evidence="5">
    <original>D</original>
    <variation>N</variation>
    <location>
        <position position="112"/>
    </location>
</feature>
<feature type="sequence conflict" description="In Ref. 5." evidence="11" ref="5">
    <original>A</original>
    <variation>G</variation>
    <location>
        <position position="23"/>
    </location>
</feature>
<feature type="sequence conflict" description="In Ref. 1; CBJ34334." ref="1">
    <original>D</original>
    <variation>E</variation>
    <location>
        <position position="93"/>
    </location>
</feature>
<feature type="sequence conflict" description="In Ref. 5." evidence="11" ref="5">
    <original>S</original>
    <variation>N</variation>
    <location>
        <position position="224"/>
    </location>
</feature>
<name>IF4EA_SOLTU</name>
<reference key="1">
    <citation type="journal article" date="2011" name="J. Virol.">
        <title>Helper component proteinase of the genus Potyvirus is an interaction partner of translation initiation factors eIF(iso)4E and eIF4E and contains a 4E binding motif.</title>
        <authorList>
            <person name="Ala-Poikela M.S."/>
            <person name="Goytia E."/>
            <person name="Haikonen T."/>
            <person name="Rajamaeki M.L."/>
            <person name="Valkonen J.P.T."/>
        </authorList>
    </citation>
    <scope>NUCLEOTIDE SEQUENCE [MRNA]</scope>
    <source>
        <tissue>Leaf</tissue>
    </source>
</reference>
<reference key="2">
    <citation type="journal article" date="2011" name="Plant Biotechnol. J.">
        <title>Engineering virus resistance using a modified potato gene.</title>
        <authorList>
            <person name="Cavatorta J."/>
            <person name="Perez K.W."/>
            <person name="Gray S.M."/>
            <person name="Van Eck J."/>
            <person name="Yeam I."/>
            <person name="Jahn M."/>
        </authorList>
    </citation>
    <scope>NUCLEOTIDE SEQUENCE [MRNA]</scope>
    <scope>FUNCTION</scope>
    <scope>FUNCTION (MICROBIAL INFECTION)</scope>
    <scope>VARIANTS THR-3; ASN-138 AND TYR-206</scope>
    <scope>MUTAGENESIS OF LEU-48; SER-68; PRO-69; ILE-70; ALA-77; LEU-82; MET-109; GLY-110 AND ASP-112</scope>
    <scope>SUBUNIT (MICROBIAL INFECTION)</scope>
    <source>
        <strain>cv. Russet Burbank-0</strain>
    </source>
</reference>
<reference key="3">
    <citation type="journal article" date="2012" name="Transgenic Res.">
        <title>Overexpression of the wild potato eIF4E-1 variant Eva1 elicits Potato virus Y resistance in plants silenced for native eIF4E-1.</title>
        <authorList>
            <person name="Duan H."/>
            <person name="Richael C."/>
            <person name="Rommens C.M."/>
        </authorList>
    </citation>
    <scope>NUCLEOTIDE SEQUENCE [MRNA]</scope>
    <scope>FUNCTION</scope>
    <scope>FUNCTION (MICROBIAL INFECTION)</scope>
    <scope>VARIANTS ASN-138 AND TYR-206</scope>
    <scope>SUBUNIT (MICROBIAL INFECTION)</scope>
    <source>
        <strain>cv. Russet Burbank-0</strain>
    </source>
</reference>
<reference key="4">
    <citation type="submission" date="2020-07" db="EMBL/GenBank/DDBJ databases">
        <title>Solanum tuberosum cultivar Zhukovskiy ranniy eukaryotic translation initiation factor eIF4E-1 (eIF4E-1) mRNA, eIF4E-1-2 allele.</title>
        <authorList>
            <person name="Lebedeva M.V."/>
            <person name="Taranov V.V."/>
            <person name="Babakov A.V."/>
        </authorList>
    </citation>
    <scope>NUCLEOTIDE SEQUENCE [MRNA]</scope>
</reference>
<reference key="5">
    <citation type="journal article" date="2011" name="Nature">
        <title>Genome sequence and analysis of the tuber crop potato.</title>
        <authorList>
            <consortium name="The Potato Genome Sequencing Consortium"/>
        </authorList>
    </citation>
    <scope>NUCLEOTIDE SEQUENCE [LARGE SCALE GENOMIC DNA]</scope>
    <source>
        <strain>cv. DM1-3 516 R44</strain>
    </source>
</reference>
<reference key="6">
    <citation type="journal article" date="2020" name="BMC Genomics">
        <title>Overexpression of a modified eIF4E regulates potato virus Y resistance at the transcriptional level in potato.</title>
        <authorList>
            <person name="Gutierrez Sanchez P.A."/>
            <person name="Babujee L."/>
            <person name="Jaramillo Mesa H."/>
            <person name="Arcibal E."/>
            <person name="Gannon M."/>
            <person name="Halterman D."/>
            <person name="Jahn M."/>
            <person name="Jiang J."/>
            <person name="Rakotondrafara A.M."/>
        </authorList>
    </citation>
    <scope>NUCLEOTIDE SEQUENCE [MRNA] OF 8-231</scope>
    <scope>FUNCTION</scope>
    <scope>FUNCTION (MICROBIAL INFECTION)</scope>
    <scope>SUBUNIT (MICROBIAL INFECTION)</scope>
    <source>
        <strain>cv. ATLWT</strain>
    </source>
</reference>
<reference key="7">
    <citation type="journal article" date="2014" name="Infect. Genet. Evol.">
        <title>Evolution of plant eukaryotic initiation factor 4E (eIF4E) and potyvirus genome-linked protein (VPg): a game of mirrors impacting resistance spectrum and durability.</title>
        <authorList>
            <person name="Moury B."/>
            <person name="Charron C."/>
            <person name="Janzac B."/>
            <person name="Simon V."/>
            <person name="Gallois J.L."/>
            <person name="Palloix A."/>
            <person name="Caranta C."/>
        </authorList>
    </citation>
    <scope>GENE FAMILY</scope>
    <scope>REVIEW</scope>
</reference>